<accession>P47257</accession>
<accession>Q49362</accession>
<sequence>MGKIKLKNRKALVVYDNKDDFEKNQTFALSLIKELQKKKLNAEVLLLENKDINFEAKINEAELILNRSRKVDFLKTNNQINTFLVNPFNVVFIANDKYETYKWLKQNRFLTVNSSLLSKETIKSFPVIVKKRNSHGGKDVHLVNSADEIKHLNIENATEWIVQPFLSIGTVEYRAYILFGKIIKVIKKISNANQFKANFSQGAEVSLFKLKWFTKRKIKKIAKRLREGYYAIDFFLNRYNRVIVNEIEDAAGARALVQLCPDLNITKIIIRTIISKFKKFLKKKLIS</sequence>
<feature type="chain" id="PRO_0000210385" description="Uncharacterized protein MG011">
    <location>
        <begin position="1"/>
        <end position="287"/>
    </location>
</feature>
<feature type="domain" description="ATP-grasp" evidence="1">
    <location>
        <begin position="115"/>
        <end position="287"/>
    </location>
</feature>
<feature type="sequence conflict" description="In Ref. 2; AAD12522." evidence="2" ref="2">
    <original>T</original>
    <variation>P</variation>
    <location>
        <position position="158"/>
    </location>
</feature>
<feature type="sequence conflict" description="In Ref. 2; AAD12522." evidence="2" ref="2">
    <original>A</original>
    <variation>R</variation>
    <location>
        <position position="255"/>
    </location>
</feature>
<gene>
    <name type="ordered locus">MG011</name>
</gene>
<evidence type="ECO:0000255" key="1">
    <source>
        <dbReference type="PROSITE-ProRule" id="PRU00409"/>
    </source>
</evidence>
<evidence type="ECO:0000305" key="2"/>
<name>Y011_MYCGE</name>
<dbReference type="EMBL" id="L43967">
    <property type="protein sequence ID" value="AAC71227.1"/>
    <property type="molecule type" value="Genomic_DNA"/>
</dbReference>
<dbReference type="EMBL" id="U02257">
    <property type="protein sequence ID" value="AAD12522.1"/>
    <property type="molecule type" value="Genomic_DNA"/>
</dbReference>
<dbReference type="PIR" id="B64201">
    <property type="entry name" value="B64201"/>
</dbReference>
<dbReference type="RefSeq" id="WP_009885973.1">
    <property type="nucleotide sequence ID" value="NC_000908.2"/>
</dbReference>
<dbReference type="SMR" id="P47257"/>
<dbReference type="STRING" id="243273.MG_011"/>
<dbReference type="GeneID" id="88282126"/>
<dbReference type="KEGG" id="mge:MG_011"/>
<dbReference type="eggNOG" id="COG0189">
    <property type="taxonomic scope" value="Bacteria"/>
</dbReference>
<dbReference type="HOGENOM" id="CLU_054353_0_2_14"/>
<dbReference type="InParanoid" id="P47257"/>
<dbReference type="OrthoDB" id="4426445at2"/>
<dbReference type="BioCyc" id="MGEN243273:G1GJ2-11-MONOMER"/>
<dbReference type="Proteomes" id="UP000000807">
    <property type="component" value="Chromosome"/>
</dbReference>
<dbReference type="GO" id="GO:0005737">
    <property type="term" value="C:cytoplasm"/>
    <property type="evidence" value="ECO:0000318"/>
    <property type="project" value="GO_Central"/>
</dbReference>
<dbReference type="GO" id="GO:0005524">
    <property type="term" value="F:ATP binding"/>
    <property type="evidence" value="ECO:0007669"/>
    <property type="project" value="InterPro"/>
</dbReference>
<dbReference type="GO" id="GO:0046872">
    <property type="term" value="F:metal ion binding"/>
    <property type="evidence" value="ECO:0007669"/>
    <property type="project" value="InterPro"/>
</dbReference>
<dbReference type="GO" id="GO:0018169">
    <property type="term" value="F:ribosomal S6-glutamic acid ligase activity"/>
    <property type="evidence" value="ECO:0000318"/>
    <property type="project" value="GO_Central"/>
</dbReference>
<dbReference type="GO" id="GO:0009432">
    <property type="term" value="P:SOS response"/>
    <property type="evidence" value="ECO:0000318"/>
    <property type="project" value="GO_Central"/>
</dbReference>
<dbReference type="Gene3D" id="3.30.1490.20">
    <property type="entry name" value="ATP-grasp fold, A domain"/>
    <property type="match status" value="1"/>
</dbReference>
<dbReference type="Gene3D" id="3.30.470.20">
    <property type="entry name" value="ATP-grasp fold, B domain"/>
    <property type="match status" value="1"/>
</dbReference>
<dbReference type="InterPro" id="IPR011761">
    <property type="entry name" value="ATP-grasp"/>
</dbReference>
<dbReference type="InterPro" id="IPR013651">
    <property type="entry name" value="ATP-grasp_RimK-type"/>
</dbReference>
<dbReference type="InterPro" id="IPR013815">
    <property type="entry name" value="ATP_grasp_subdomain_1"/>
</dbReference>
<dbReference type="PANTHER" id="PTHR21621:SF0">
    <property type="entry name" value="BETA-CITRYLGLUTAMATE SYNTHASE B-RELATED"/>
    <property type="match status" value="1"/>
</dbReference>
<dbReference type="PANTHER" id="PTHR21621">
    <property type="entry name" value="RIBOSOMAL PROTEIN S6 MODIFICATION PROTEIN"/>
    <property type="match status" value="1"/>
</dbReference>
<dbReference type="Pfam" id="PF08443">
    <property type="entry name" value="RimK"/>
    <property type="match status" value="1"/>
</dbReference>
<dbReference type="SUPFAM" id="SSF56059">
    <property type="entry name" value="Glutathione synthetase ATP-binding domain-like"/>
    <property type="match status" value="1"/>
</dbReference>
<dbReference type="PROSITE" id="PS50975">
    <property type="entry name" value="ATP_GRASP"/>
    <property type="match status" value="1"/>
</dbReference>
<organism>
    <name type="scientific">Mycoplasma genitalium (strain ATCC 33530 / DSM 19775 / NCTC 10195 / G37)</name>
    <name type="common">Mycoplasmoides genitalium</name>
    <dbReference type="NCBI Taxonomy" id="243273"/>
    <lineage>
        <taxon>Bacteria</taxon>
        <taxon>Bacillati</taxon>
        <taxon>Mycoplasmatota</taxon>
        <taxon>Mycoplasmoidales</taxon>
        <taxon>Mycoplasmoidaceae</taxon>
        <taxon>Mycoplasmoides</taxon>
    </lineage>
</organism>
<proteinExistence type="predicted"/>
<keyword id="KW-1185">Reference proteome</keyword>
<protein>
    <recommendedName>
        <fullName>Uncharacterized protein MG011</fullName>
    </recommendedName>
</protein>
<reference key="1">
    <citation type="journal article" date="1995" name="Science">
        <title>The minimal gene complement of Mycoplasma genitalium.</title>
        <authorList>
            <person name="Fraser C.M."/>
            <person name="Gocayne J.D."/>
            <person name="White O."/>
            <person name="Adams M.D."/>
            <person name="Clayton R.A."/>
            <person name="Fleischmann R.D."/>
            <person name="Bult C.J."/>
            <person name="Kerlavage A.R."/>
            <person name="Sutton G.G."/>
            <person name="Kelley J.M."/>
            <person name="Fritchman J.L."/>
            <person name="Weidman J.F."/>
            <person name="Small K.V."/>
            <person name="Sandusky M."/>
            <person name="Fuhrmann J.L."/>
            <person name="Nguyen D.T."/>
            <person name="Utterback T.R."/>
            <person name="Saudek D.M."/>
            <person name="Phillips C.A."/>
            <person name="Merrick J.M."/>
            <person name="Tomb J.-F."/>
            <person name="Dougherty B.A."/>
            <person name="Bott K.F."/>
            <person name="Hu P.-C."/>
            <person name="Lucier T.S."/>
            <person name="Peterson S.N."/>
            <person name="Smith H.O."/>
            <person name="Hutchison C.A. III"/>
            <person name="Venter J.C."/>
        </authorList>
    </citation>
    <scope>NUCLEOTIDE SEQUENCE [LARGE SCALE GENOMIC DNA]</scope>
    <source>
        <strain>ATCC 33530 / DSM 19775 / NCTC 10195 / G37</strain>
    </source>
</reference>
<reference key="2">
    <citation type="journal article" date="1993" name="J. Bacteriol.">
        <title>A survey of the Mycoplasma genitalium genome by using random sequencing.</title>
        <authorList>
            <person name="Peterson S.N."/>
            <person name="Hu P.-C."/>
            <person name="Bott K.F."/>
            <person name="Hutchison C.A. III"/>
        </authorList>
    </citation>
    <scope>NUCLEOTIDE SEQUENCE [GENOMIC DNA] OF 158-255</scope>
    <source>
        <strain>ATCC 33530 / DSM 19775 / NCTC 10195 / G37</strain>
    </source>
</reference>